<dbReference type="EC" id="2.4.1.-" evidence="4"/>
<dbReference type="EMBL" id="AY345975">
    <property type="protein sequence ID" value="AAR06913.1"/>
    <property type="molecule type" value="mRNA"/>
</dbReference>
<dbReference type="SMR" id="Q6VAB3"/>
<dbReference type="CAZy" id="GT1">
    <property type="family name" value="Glycosyltransferase Family 1"/>
</dbReference>
<dbReference type="GO" id="GO:0080043">
    <property type="term" value="F:quercetin 3-O-glucosyltransferase activity"/>
    <property type="evidence" value="ECO:0007669"/>
    <property type="project" value="TreeGrafter"/>
</dbReference>
<dbReference type="GO" id="GO:0080044">
    <property type="term" value="F:quercetin 7-O-glucosyltransferase activity"/>
    <property type="evidence" value="ECO:0007669"/>
    <property type="project" value="TreeGrafter"/>
</dbReference>
<dbReference type="CDD" id="cd03784">
    <property type="entry name" value="GT1_Gtf-like"/>
    <property type="match status" value="1"/>
</dbReference>
<dbReference type="FunFam" id="3.40.50.2000:FF:000027">
    <property type="entry name" value="Glycosyltransferase"/>
    <property type="match status" value="1"/>
</dbReference>
<dbReference type="FunFam" id="3.40.50.2000:FF:000055">
    <property type="entry name" value="Glycosyltransferase"/>
    <property type="match status" value="1"/>
</dbReference>
<dbReference type="Gene3D" id="3.40.50.2000">
    <property type="entry name" value="Glycogen Phosphorylase B"/>
    <property type="match status" value="2"/>
</dbReference>
<dbReference type="InterPro" id="IPR002213">
    <property type="entry name" value="UDP_glucos_trans"/>
</dbReference>
<dbReference type="InterPro" id="IPR035595">
    <property type="entry name" value="UDP_glycos_trans_CS"/>
</dbReference>
<dbReference type="PANTHER" id="PTHR11926">
    <property type="entry name" value="GLUCOSYL/GLUCURONOSYL TRANSFERASES"/>
    <property type="match status" value="1"/>
</dbReference>
<dbReference type="PANTHER" id="PTHR11926:SF1498">
    <property type="entry name" value="GLYCOSYLTRANSFERASE"/>
    <property type="match status" value="1"/>
</dbReference>
<dbReference type="Pfam" id="PF00201">
    <property type="entry name" value="UDPGT"/>
    <property type="match status" value="1"/>
</dbReference>
<dbReference type="SUPFAM" id="SSF53756">
    <property type="entry name" value="UDP-Glycosyltransferase/glycogen phosphorylase"/>
    <property type="match status" value="1"/>
</dbReference>
<dbReference type="PROSITE" id="PS00375">
    <property type="entry name" value="UDPGT"/>
    <property type="match status" value="1"/>
</dbReference>
<keyword id="KW-0328">Glycosyltransferase</keyword>
<keyword id="KW-0808">Transferase</keyword>
<proteinExistence type="evidence at transcript level"/>
<feature type="chain" id="PRO_0000434468" description="UDP-glycosyltransferase 85A8">
    <location>
        <begin position="1"/>
        <end position="479"/>
    </location>
</feature>
<feature type="binding site" evidence="2">
    <location>
        <position position="302"/>
    </location>
    <ligand>
        <name>UDP-alpha-D-glucose</name>
        <dbReference type="ChEBI" id="CHEBI:58885"/>
    </ligand>
</feature>
<feature type="binding site" evidence="2">
    <location>
        <begin position="358"/>
        <end position="359"/>
    </location>
    <ligand>
        <name>UDP-alpha-D-glucose</name>
        <dbReference type="ChEBI" id="CHEBI:58885"/>
    </ligand>
</feature>
<feature type="binding site" evidence="2">
    <location>
        <begin position="376"/>
        <end position="384"/>
    </location>
    <ligand>
        <name>UDP-alpha-D-glucose</name>
        <dbReference type="ChEBI" id="CHEBI:58885"/>
    </ligand>
</feature>
<feature type="binding site" evidence="2">
    <location>
        <begin position="398"/>
        <end position="401"/>
    </location>
    <ligand>
        <name>UDP-alpha-D-glucose</name>
        <dbReference type="ChEBI" id="CHEBI:58885"/>
    </ligand>
</feature>
<name>U85A8_STERE</name>
<accession>Q6VAB3</accession>
<comment type="function">
    <text evidence="1">May glycosylate diterpenes or flavonols in leaves.</text>
</comment>
<comment type="similarity">
    <text evidence="4">Belongs to the UDP-glycosyltransferase family.</text>
</comment>
<protein>
    <recommendedName>
        <fullName evidence="3">UDP-glycosyltransferase 85A8</fullName>
        <ecNumber evidence="4">2.4.1.-</ecNumber>
    </recommendedName>
</protein>
<reference key="1">
    <citation type="journal article" date="2005" name="Plant J.">
        <title>Functional genomics uncovers three glucosyltransferases involved in the synthesis of the major sweet glucosides of Stevia rebaudiana.</title>
        <authorList>
            <person name="Richman A."/>
            <person name="Swanson A."/>
            <person name="Humphrey T."/>
            <person name="Chapman R."/>
            <person name="McGarvey B."/>
            <person name="Pocs R."/>
            <person name="Brandle J."/>
        </authorList>
    </citation>
    <scope>NUCLEOTIDE SEQUENCE [MRNA]</scope>
    <source>
        <tissue>Leaf</tissue>
    </source>
</reference>
<gene>
    <name evidence="3" type="primary">UGT85A8</name>
</gene>
<sequence length="479" mass="54242">MASIAEMQKPHAICIPYPAQGHINPMMQFAKLLHFKGFHISFVNNHYNHKRLQRSRGLSALEGLPDFHFYSIPDGLPPSNAEATQSIPGLCESIPKHSLEPFCDLIATLNGSDVPPVSCIISDGVMSFTLQAAERFGLPEVLFWTPSACGFLAYTHYRDLVDKEYIPLKDTNDLTNGYLETSLDWIPGMKNIRLKDFPSFIRTTDINDIMLNYFLIETEAIPKGVAIILNTFDALEKDSITPVLALNPQIYTIGPLHMMQQYVDHDERLKHIGSNLWKEDVSCINWLDTKKPNSVVYVNFGSITVMTKEQLIEFGWGLANSKKDFLWITRPDIVGGNEAMIPAEFIEETKERGMVTSWCSQEEVLKHPSIGVFLTHSGWNSTIESISNGVPMICWPFFAEQQTNCRYCCVEWEIGLEIDTDVKREEVEAQVREMMDGSKGKMMKNKALEWKKKAEEAVSIGGSSYLNFEKLVTDVLLRK</sequence>
<evidence type="ECO:0000250" key="1">
    <source>
        <dbReference type="UniProtKB" id="Q6VAA6"/>
    </source>
</evidence>
<evidence type="ECO:0000250" key="2">
    <source>
        <dbReference type="UniProtKB" id="Q9M156"/>
    </source>
</evidence>
<evidence type="ECO:0000303" key="3">
    <source>
    </source>
</evidence>
<evidence type="ECO:0000305" key="4"/>
<organism>
    <name type="scientific">Stevia rebaudiana</name>
    <name type="common">Stevia</name>
    <name type="synonym">Eupatorium rebaudianum</name>
    <dbReference type="NCBI Taxonomy" id="55670"/>
    <lineage>
        <taxon>Eukaryota</taxon>
        <taxon>Viridiplantae</taxon>
        <taxon>Streptophyta</taxon>
        <taxon>Embryophyta</taxon>
        <taxon>Tracheophyta</taxon>
        <taxon>Spermatophyta</taxon>
        <taxon>Magnoliopsida</taxon>
        <taxon>eudicotyledons</taxon>
        <taxon>Gunneridae</taxon>
        <taxon>Pentapetalae</taxon>
        <taxon>asterids</taxon>
        <taxon>campanulids</taxon>
        <taxon>Asterales</taxon>
        <taxon>Asteraceae</taxon>
        <taxon>Asteroideae</taxon>
        <taxon>Heliantheae alliance</taxon>
        <taxon>Eupatorieae</taxon>
        <taxon>Stevia</taxon>
    </lineage>
</organism>